<gene>
    <name evidence="1" type="primary">ade2</name>
    <name type="ordered locus">ABC3209</name>
</gene>
<name>ADEC2_SHOC1</name>
<accession>Q5WD17</accession>
<proteinExistence type="inferred from homology"/>
<keyword id="KW-0378">Hydrolase</keyword>
<keyword id="KW-0464">Manganese</keyword>
<keyword id="KW-1185">Reference proteome</keyword>
<protein>
    <recommendedName>
        <fullName evidence="1">Adenine deaminase 2</fullName>
        <shortName evidence="1">Adenase 2</shortName>
        <shortName evidence="1">Adenine aminase 2</shortName>
        <ecNumber evidence="1">3.5.4.2</ecNumber>
    </recommendedName>
</protein>
<dbReference type="EC" id="3.5.4.2" evidence="1"/>
<dbReference type="EMBL" id="AP006627">
    <property type="protein sequence ID" value="BAD65743.1"/>
    <property type="molecule type" value="Genomic_DNA"/>
</dbReference>
<dbReference type="RefSeq" id="WP_011248051.1">
    <property type="nucleotide sequence ID" value="NC_006582.1"/>
</dbReference>
<dbReference type="SMR" id="Q5WD17"/>
<dbReference type="STRING" id="66692.ABC3209"/>
<dbReference type="KEGG" id="bcl:ABC3209"/>
<dbReference type="eggNOG" id="COG1001">
    <property type="taxonomic scope" value="Bacteria"/>
</dbReference>
<dbReference type="HOGENOM" id="CLU_027935_0_0_9"/>
<dbReference type="OrthoDB" id="9775607at2"/>
<dbReference type="Proteomes" id="UP000001168">
    <property type="component" value="Chromosome"/>
</dbReference>
<dbReference type="GO" id="GO:0000034">
    <property type="term" value="F:adenine deaminase activity"/>
    <property type="evidence" value="ECO:0007669"/>
    <property type="project" value="UniProtKB-UniRule"/>
</dbReference>
<dbReference type="GO" id="GO:0006146">
    <property type="term" value="P:adenine catabolic process"/>
    <property type="evidence" value="ECO:0007669"/>
    <property type="project" value="InterPro"/>
</dbReference>
<dbReference type="Gene3D" id="3.20.20.140">
    <property type="entry name" value="Metal-dependent hydrolases"/>
    <property type="match status" value="1"/>
</dbReference>
<dbReference type="Gene3D" id="2.30.40.10">
    <property type="entry name" value="Urease, subunit C, domain 1"/>
    <property type="match status" value="1"/>
</dbReference>
<dbReference type="HAMAP" id="MF_01518">
    <property type="entry name" value="Adenine_deamin"/>
    <property type="match status" value="1"/>
</dbReference>
<dbReference type="InterPro" id="IPR006679">
    <property type="entry name" value="Adenine_deam"/>
</dbReference>
<dbReference type="InterPro" id="IPR026912">
    <property type="entry name" value="Adenine_deam_C"/>
</dbReference>
<dbReference type="InterPro" id="IPR006680">
    <property type="entry name" value="Amidohydro-rel"/>
</dbReference>
<dbReference type="InterPro" id="IPR011059">
    <property type="entry name" value="Metal-dep_hydrolase_composite"/>
</dbReference>
<dbReference type="InterPro" id="IPR032466">
    <property type="entry name" value="Metal_Hydrolase"/>
</dbReference>
<dbReference type="PANTHER" id="PTHR11113:SF2">
    <property type="entry name" value="ADENINE DEAMINASE"/>
    <property type="match status" value="1"/>
</dbReference>
<dbReference type="PANTHER" id="PTHR11113">
    <property type="entry name" value="N-ACETYLGLUCOSAMINE-6-PHOSPHATE DEACETYLASE"/>
    <property type="match status" value="1"/>
</dbReference>
<dbReference type="Pfam" id="PF13382">
    <property type="entry name" value="Adenine_deam_C"/>
    <property type="match status" value="1"/>
</dbReference>
<dbReference type="Pfam" id="PF01979">
    <property type="entry name" value="Amidohydro_1"/>
    <property type="match status" value="1"/>
</dbReference>
<dbReference type="SUPFAM" id="SSF51338">
    <property type="entry name" value="Composite domain of metallo-dependent hydrolases"/>
    <property type="match status" value="1"/>
</dbReference>
<dbReference type="SUPFAM" id="SSF51556">
    <property type="entry name" value="Metallo-dependent hydrolases"/>
    <property type="match status" value="1"/>
</dbReference>
<feature type="chain" id="PRO_0000142403" description="Adenine deaminase 2">
    <location>
        <begin position="1"/>
        <end position="573"/>
    </location>
</feature>
<comment type="catalytic activity">
    <reaction evidence="1">
        <text>adenine + H2O + H(+) = hypoxanthine + NH4(+)</text>
        <dbReference type="Rhea" id="RHEA:23688"/>
        <dbReference type="ChEBI" id="CHEBI:15377"/>
        <dbReference type="ChEBI" id="CHEBI:15378"/>
        <dbReference type="ChEBI" id="CHEBI:16708"/>
        <dbReference type="ChEBI" id="CHEBI:17368"/>
        <dbReference type="ChEBI" id="CHEBI:28938"/>
        <dbReference type="EC" id="3.5.4.2"/>
    </reaction>
</comment>
<comment type="cofactor">
    <cofactor evidence="1">
        <name>Mn(2+)</name>
        <dbReference type="ChEBI" id="CHEBI:29035"/>
    </cofactor>
</comment>
<comment type="similarity">
    <text evidence="1">Belongs to the metallo-dependent hydrolases superfamily. Adenine deaminase family.</text>
</comment>
<reference key="1">
    <citation type="submission" date="2003-10" db="EMBL/GenBank/DDBJ databases">
        <title>The complete genome sequence of the alkaliphilic Bacillus clausii KSM-K16.</title>
        <authorList>
            <person name="Takaki Y."/>
            <person name="Kageyama Y."/>
            <person name="Shimamura S."/>
            <person name="Suzuki H."/>
            <person name="Nishi S."/>
            <person name="Hatada Y."/>
            <person name="Kawai S."/>
            <person name="Ito S."/>
            <person name="Horikoshi K."/>
        </authorList>
    </citation>
    <scope>NUCLEOTIDE SEQUENCE [LARGE SCALE GENOMIC DNA]</scope>
    <source>
        <strain>KSM-K16</strain>
    </source>
</reference>
<sequence>MHVDTLVKNVRVYNAYTQQFIASDVAIDEGRFVAIGHSDELESIQANTIIDGQGQQMIPGLIDIHLHIESSMVTPETFSWALLRNGVTTIVAEPHEMANVFGIEGIKAMIEASAACTVDMKYAIPSSVPATSLETTGGAIGIAEMDELMDTEDIQCLGEIMNYVDVLSKPDSKTNQILKHFRRSYPALPIEGHVPKLTGLDLHQIVAAGIGSDHTHQTREGMEARIKAGMFLEIQEKSMTDDVLSYLIENDTREHFCFVTDDVMADSLYKRGHLNVLANKALAAGMKFEDVIYACTMAPAKRMKLEDRGAIAPGKIADFILLAEDGQFVFSAVYKDGMLAFDAASPYKQTPKPRQFPPHFYESVKLAPLQEEDFHVVADRQDGIHVCRVMNVADGSTFTKETQERVPVANGLLQWQDSDFRLIATFERYGKTGGRAHGLIAGDILQRGAVATTYSHDNHNLLVVGANILDMVCAANAVIQAQGGCAVVENGEVKAMLELPVGGILSEAPLAELAPKVESFVKALTALGYKHYNPIMSLSTLSLPVSPALKITDFGLIDVNNGQVVPLFVNEKS</sequence>
<evidence type="ECO:0000255" key="1">
    <source>
        <dbReference type="HAMAP-Rule" id="MF_01518"/>
    </source>
</evidence>
<organism>
    <name type="scientific">Shouchella clausii (strain KSM-K16)</name>
    <name type="common">Alkalihalobacillus clausii</name>
    <dbReference type="NCBI Taxonomy" id="66692"/>
    <lineage>
        <taxon>Bacteria</taxon>
        <taxon>Bacillati</taxon>
        <taxon>Bacillota</taxon>
        <taxon>Bacilli</taxon>
        <taxon>Bacillales</taxon>
        <taxon>Bacillaceae</taxon>
        <taxon>Shouchella</taxon>
    </lineage>
</organism>